<comment type="interaction">
    <interactant intactId="EBI-12023322">
        <id>Q8N831</id>
    </interactant>
    <interactant intactId="EBI-739789">
        <id>Q92997</id>
        <label>DVL3</label>
    </interactant>
    <organismsDiffer>false</organismsDiffer>
    <experiments>3</experiments>
</comment>
<comment type="interaction">
    <interactant intactId="EBI-12023322">
        <id>Q8N831</id>
    </interactant>
    <interactant intactId="EBI-2556193">
        <id>Q63ZY3</id>
        <label>KANK2</label>
    </interactant>
    <organismsDiffer>false</organismsDiffer>
    <experiments>3</experiments>
</comment>
<comment type="interaction">
    <interactant intactId="EBI-12023322">
        <id>Q8N831</id>
    </interactant>
    <interactant intactId="EBI-11953846">
        <id>Q52LG2</id>
        <label>KRTAP13-2</label>
    </interactant>
    <organismsDiffer>false</organismsDiffer>
    <experiments>3</experiments>
</comment>
<comment type="interaction">
    <interactant intactId="EBI-12023322">
        <id>Q8N831</id>
    </interactant>
    <interactant intactId="EBI-1048945">
        <id>Q3LI72</id>
        <label>KRTAP19-5</label>
    </interactant>
    <organismsDiffer>false</organismsDiffer>
    <experiments>3</experiments>
</comment>
<comment type="interaction">
    <interactant intactId="EBI-12023322">
        <id>Q8N831</id>
    </interactant>
    <interactant intactId="EBI-12805508">
        <id>Q3LI70</id>
        <label>KRTAP19-6</label>
    </interactant>
    <organismsDiffer>false</organismsDiffer>
    <experiments>3</experiments>
</comment>
<comment type="interaction">
    <interactant intactId="EBI-12023322">
        <id>Q8N831</id>
    </interactant>
    <interactant intactId="EBI-11962084">
        <id>Q3LI66</id>
        <label>KRTAP6-2</label>
    </interactant>
    <organismsDiffer>false</organismsDiffer>
    <experiments>3</experiments>
</comment>
<comment type="interaction">
    <interactant intactId="EBI-12023322">
        <id>Q8N831</id>
    </interactant>
    <interactant intactId="EBI-22311199">
        <id>Q3LI67</id>
        <label>KRTAP6-3</label>
    </interactant>
    <organismsDiffer>false</organismsDiffer>
    <experiments>3</experiments>
</comment>
<comment type="interaction">
    <interactant intactId="EBI-12023322">
        <id>Q8N831</id>
    </interactant>
    <interactant intactId="EBI-10261141">
        <id>Q8IUC2</id>
        <label>KRTAP8-1</label>
    </interactant>
    <organismsDiffer>false</organismsDiffer>
    <experiments>3</experiments>
</comment>
<comment type="interaction">
    <interactant intactId="EBI-12023322">
        <id>Q8N831</id>
    </interactant>
    <interactant intactId="EBI-1045155">
        <id>P43360</id>
        <label>MAGEA6</label>
    </interactant>
    <organismsDiffer>false</organismsDiffer>
    <experiments>3</experiments>
</comment>
<comment type="interaction">
    <interactant intactId="EBI-12023322">
        <id>Q8N831</id>
    </interactant>
    <interactant intactId="EBI-724076">
        <id>Q99750</id>
        <label>MDFI</label>
    </interactant>
    <organismsDiffer>false</organismsDiffer>
    <experiments>3</experiments>
</comment>
<comment type="interaction">
    <interactant intactId="EBI-12023322">
        <id>Q8N831</id>
    </interactant>
    <interactant intactId="EBI-740343">
        <id>Q93062-3</id>
        <label>RBPMS</label>
    </interactant>
    <organismsDiffer>false</organismsDiffer>
    <experiments>3</experiments>
</comment>
<comment type="similarity">
    <text evidence="3">Belongs to the nucleosome assembly protein (NAP) family.</text>
</comment>
<reference key="1">
    <citation type="journal article" date="2004" name="Nat. Genet.">
        <title>Complete sequencing and characterization of 21,243 full-length human cDNAs.</title>
        <authorList>
            <person name="Ota T."/>
            <person name="Suzuki Y."/>
            <person name="Nishikawa T."/>
            <person name="Otsuki T."/>
            <person name="Sugiyama T."/>
            <person name="Irie R."/>
            <person name="Wakamatsu A."/>
            <person name="Hayashi K."/>
            <person name="Sato H."/>
            <person name="Nagai K."/>
            <person name="Kimura K."/>
            <person name="Makita H."/>
            <person name="Sekine M."/>
            <person name="Obayashi M."/>
            <person name="Nishi T."/>
            <person name="Shibahara T."/>
            <person name="Tanaka T."/>
            <person name="Ishii S."/>
            <person name="Yamamoto J."/>
            <person name="Saito K."/>
            <person name="Kawai Y."/>
            <person name="Isono Y."/>
            <person name="Nakamura Y."/>
            <person name="Nagahari K."/>
            <person name="Murakami K."/>
            <person name="Yasuda T."/>
            <person name="Iwayanagi T."/>
            <person name="Wagatsuma M."/>
            <person name="Shiratori A."/>
            <person name="Sudo H."/>
            <person name="Hosoiri T."/>
            <person name="Kaku Y."/>
            <person name="Kodaira H."/>
            <person name="Kondo H."/>
            <person name="Sugawara M."/>
            <person name="Takahashi M."/>
            <person name="Kanda K."/>
            <person name="Yokoi T."/>
            <person name="Furuya T."/>
            <person name="Kikkawa E."/>
            <person name="Omura Y."/>
            <person name="Abe K."/>
            <person name="Kamihara K."/>
            <person name="Katsuta N."/>
            <person name="Sato K."/>
            <person name="Tanikawa M."/>
            <person name="Yamazaki M."/>
            <person name="Ninomiya K."/>
            <person name="Ishibashi T."/>
            <person name="Yamashita H."/>
            <person name="Murakawa K."/>
            <person name="Fujimori K."/>
            <person name="Tanai H."/>
            <person name="Kimata M."/>
            <person name="Watanabe M."/>
            <person name="Hiraoka S."/>
            <person name="Chiba Y."/>
            <person name="Ishida S."/>
            <person name="Ono Y."/>
            <person name="Takiguchi S."/>
            <person name="Watanabe S."/>
            <person name="Yosida M."/>
            <person name="Hotuta T."/>
            <person name="Kusano J."/>
            <person name="Kanehori K."/>
            <person name="Takahashi-Fujii A."/>
            <person name="Hara H."/>
            <person name="Tanase T.-O."/>
            <person name="Nomura Y."/>
            <person name="Togiya S."/>
            <person name="Komai F."/>
            <person name="Hara R."/>
            <person name="Takeuchi K."/>
            <person name="Arita M."/>
            <person name="Imose N."/>
            <person name="Musashino K."/>
            <person name="Yuuki H."/>
            <person name="Oshima A."/>
            <person name="Sasaki N."/>
            <person name="Aotsuka S."/>
            <person name="Yoshikawa Y."/>
            <person name="Matsunawa H."/>
            <person name="Ichihara T."/>
            <person name="Shiohata N."/>
            <person name="Sano S."/>
            <person name="Moriya S."/>
            <person name="Momiyama H."/>
            <person name="Satoh N."/>
            <person name="Takami S."/>
            <person name="Terashima Y."/>
            <person name="Suzuki O."/>
            <person name="Nakagawa S."/>
            <person name="Senoh A."/>
            <person name="Mizoguchi H."/>
            <person name="Goto Y."/>
            <person name="Shimizu F."/>
            <person name="Wakebe H."/>
            <person name="Hishigaki H."/>
            <person name="Watanabe T."/>
            <person name="Sugiyama A."/>
            <person name="Takemoto M."/>
            <person name="Kawakami B."/>
            <person name="Yamazaki M."/>
            <person name="Watanabe K."/>
            <person name="Kumagai A."/>
            <person name="Itakura S."/>
            <person name="Fukuzumi Y."/>
            <person name="Fujimori Y."/>
            <person name="Komiyama M."/>
            <person name="Tashiro H."/>
            <person name="Tanigami A."/>
            <person name="Fujiwara T."/>
            <person name="Ono T."/>
            <person name="Yamada K."/>
            <person name="Fujii Y."/>
            <person name="Ozaki K."/>
            <person name="Hirao M."/>
            <person name="Ohmori Y."/>
            <person name="Kawabata A."/>
            <person name="Hikiji T."/>
            <person name="Kobatake N."/>
            <person name="Inagaki H."/>
            <person name="Ikema Y."/>
            <person name="Okamoto S."/>
            <person name="Okitani R."/>
            <person name="Kawakami T."/>
            <person name="Noguchi S."/>
            <person name="Itoh T."/>
            <person name="Shigeta K."/>
            <person name="Senba T."/>
            <person name="Matsumura K."/>
            <person name="Nakajima Y."/>
            <person name="Mizuno T."/>
            <person name="Morinaga M."/>
            <person name="Sasaki M."/>
            <person name="Togashi T."/>
            <person name="Oyama M."/>
            <person name="Hata H."/>
            <person name="Watanabe M."/>
            <person name="Komatsu T."/>
            <person name="Mizushima-Sugano J."/>
            <person name="Satoh T."/>
            <person name="Shirai Y."/>
            <person name="Takahashi Y."/>
            <person name="Nakagawa K."/>
            <person name="Okumura K."/>
            <person name="Nagase T."/>
            <person name="Nomura N."/>
            <person name="Kikuchi H."/>
            <person name="Masuho Y."/>
            <person name="Yamashita R."/>
            <person name="Nakai K."/>
            <person name="Yada T."/>
            <person name="Nakamura Y."/>
            <person name="Ohara O."/>
            <person name="Isogai T."/>
            <person name="Sugano S."/>
        </authorList>
    </citation>
    <scope>NUCLEOTIDE SEQUENCE [LARGE SCALE MRNA]</scope>
    <source>
        <tissue>Testis</tissue>
    </source>
</reference>
<reference key="2">
    <citation type="journal article" date="2004" name="Genome Res.">
        <title>The status, quality, and expansion of the NIH full-length cDNA project: the Mammalian Gene Collection (MGC).</title>
        <authorList>
            <consortium name="The MGC Project Team"/>
        </authorList>
    </citation>
    <scope>NUCLEOTIDE SEQUENCE [LARGE SCALE MRNA]</scope>
    <scope>VARIANTS SER-109 AND CYS-246</scope>
    <source>
        <tissue>Testis</tissue>
    </source>
</reference>
<reference key="3">
    <citation type="journal article" date="2013" name="J. Proteome Res.">
        <title>Toward a comprehensive characterization of a human cancer cell phosphoproteome.</title>
        <authorList>
            <person name="Zhou H."/>
            <person name="Di Palma S."/>
            <person name="Preisinger C."/>
            <person name="Peng M."/>
            <person name="Polat A.N."/>
            <person name="Heck A.J."/>
            <person name="Mohammed S."/>
        </authorList>
    </citation>
    <scope>PHOSPHORYLATION [LARGE SCALE ANALYSIS] AT SER-9</scope>
    <scope>IDENTIFICATION BY MASS SPECTROMETRY [LARGE SCALE ANALYSIS]</scope>
    <source>
        <tissue>Erythroleukemia</tissue>
    </source>
</reference>
<evidence type="ECO:0000256" key="1">
    <source>
        <dbReference type="SAM" id="MobiDB-lite"/>
    </source>
</evidence>
<evidence type="ECO:0000269" key="2">
    <source>
    </source>
</evidence>
<evidence type="ECO:0000305" key="3"/>
<evidence type="ECO:0007744" key="4">
    <source>
    </source>
</evidence>
<proteinExistence type="evidence at protein level"/>
<name>TSYL6_HUMAN</name>
<accession>Q8N831</accession>
<accession>Q6NUJ3</accession>
<protein>
    <recommendedName>
        <fullName>Testis-specific Y-encoded-like protein 6</fullName>
        <shortName>TSPY-like protein 6</shortName>
    </recommendedName>
</protein>
<keyword id="KW-0597">Phosphoprotein</keyword>
<keyword id="KW-1267">Proteomics identification</keyword>
<keyword id="KW-1185">Reference proteome</keyword>
<organism>
    <name type="scientific">Homo sapiens</name>
    <name type="common">Human</name>
    <dbReference type="NCBI Taxonomy" id="9606"/>
    <lineage>
        <taxon>Eukaryota</taxon>
        <taxon>Metazoa</taxon>
        <taxon>Chordata</taxon>
        <taxon>Craniata</taxon>
        <taxon>Vertebrata</taxon>
        <taxon>Euteleostomi</taxon>
        <taxon>Mammalia</taxon>
        <taxon>Eutheria</taxon>
        <taxon>Euarchontoglires</taxon>
        <taxon>Primates</taxon>
        <taxon>Haplorrhini</taxon>
        <taxon>Catarrhini</taxon>
        <taxon>Hominidae</taxon>
        <taxon>Homo</taxon>
    </lineage>
</organism>
<gene>
    <name type="primary">TSPYL6</name>
</gene>
<feature type="chain" id="PRO_0000307279" description="Testis-specific Y-encoded-like protein 6">
    <location>
        <begin position="1"/>
        <end position="410"/>
    </location>
</feature>
<feature type="region of interest" description="Disordered" evidence="1">
    <location>
        <begin position="1"/>
        <end position="31"/>
    </location>
</feature>
<feature type="region of interest" description="Disordered" evidence="1">
    <location>
        <begin position="46"/>
        <end position="69"/>
    </location>
</feature>
<feature type="compositionally biased region" description="Basic and acidic residues" evidence="1">
    <location>
        <begin position="18"/>
        <end position="31"/>
    </location>
</feature>
<feature type="modified residue" description="Phosphoserine" evidence="4">
    <location>
        <position position="9"/>
    </location>
</feature>
<feature type="sequence variant" id="VAR_035395" description="In dbSNP:rs6743719.">
    <original>A</original>
    <variation>V</variation>
    <location>
        <position position="60"/>
    </location>
</feature>
<feature type="sequence variant" id="VAR_035396" description="In dbSNP:rs843704." evidence="2">
    <original>G</original>
    <variation>S</variation>
    <location>
        <position position="109"/>
    </location>
</feature>
<feature type="sequence variant" id="VAR_035397" description="In dbSNP:rs13424808.">
    <original>P</original>
    <variation>L</variation>
    <location>
        <position position="116"/>
    </location>
</feature>
<feature type="sequence variant" id="VAR_035398" description="In dbSNP:rs17189743." evidence="2">
    <original>R</original>
    <variation>C</variation>
    <location>
        <position position="246"/>
    </location>
</feature>
<sequence length="410" mass="45874">MSLPESPHSPATLDYALEDPHQGQRSREKSKATEVMADMFDGRLEPIVFPPPRLPEEGVAPQDPADGGHTFHILVDAGRSHGAIKAGQEVTPPPAEGLEAASASLTTDGSLKNGFPGEETHGLGGEKALETCGAGRSESEVIAEGKAEDVKPEECAMFSAPVDEKPGGEEMDVAEENRAIDEVNREAGPGPGPGPLNVGLHLNPLESIQLELDSVNAEADRALLQVERRFGQIHEYYLEQRNDIIRNIPGFWVTAFRHHPQLSAMIRGQDAEMLSYLTNLEVKELRHPRTGCKFKFFFQRNPYFRNKLIVKVYEVRSFGQVVSFSTLIMWRRGHGPQSFIHRNRHVICSFFTWFSDHSLPESDRIAQIIKEDLWSNPLQYYLLGEDAHRARRRLVREPVEIPRPFGFQCG</sequence>
<dbReference type="EMBL" id="AK097417">
    <property type="protein sequence ID" value="BAC05043.1"/>
    <property type="molecule type" value="mRNA"/>
</dbReference>
<dbReference type="EMBL" id="BC068576">
    <property type="protein sequence ID" value="AAH68576.1"/>
    <property type="molecule type" value="mRNA"/>
</dbReference>
<dbReference type="CCDS" id="CCDS42682.1"/>
<dbReference type="RefSeq" id="NP_001003937.2">
    <property type="nucleotide sequence ID" value="NM_001003937.3"/>
</dbReference>
<dbReference type="SMR" id="Q8N831"/>
<dbReference type="BioGRID" id="132915">
    <property type="interactions" value="80"/>
</dbReference>
<dbReference type="FunCoup" id="Q8N831">
    <property type="interactions" value="50"/>
</dbReference>
<dbReference type="IntAct" id="Q8N831">
    <property type="interactions" value="66"/>
</dbReference>
<dbReference type="MINT" id="Q8N831"/>
<dbReference type="STRING" id="9606.ENSP00000417919"/>
<dbReference type="iPTMnet" id="Q8N831"/>
<dbReference type="PhosphoSitePlus" id="Q8N831"/>
<dbReference type="BioMuta" id="TSPYL6"/>
<dbReference type="DMDM" id="74715052"/>
<dbReference type="jPOST" id="Q8N831"/>
<dbReference type="MassIVE" id="Q8N831"/>
<dbReference type="PaxDb" id="9606-ENSP00000417919"/>
<dbReference type="PeptideAtlas" id="Q8N831"/>
<dbReference type="ProteomicsDB" id="72369"/>
<dbReference type="Antibodypedia" id="30254">
    <property type="antibodies" value="119 antibodies from 19 providers"/>
</dbReference>
<dbReference type="DNASU" id="388951"/>
<dbReference type="Ensembl" id="ENST00000317802.9">
    <property type="protein sequence ID" value="ENSP00000417919.2"/>
    <property type="gene ID" value="ENSG00000178021.11"/>
</dbReference>
<dbReference type="GeneID" id="388951"/>
<dbReference type="KEGG" id="hsa:388951"/>
<dbReference type="MANE-Select" id="ENST00000317802.9">
    <property type="protein sequence ID" value="ENSP00000417919.2"/>
    <property type="RefSeq nucleotide sequence ID" value="NM_001003937.3"/>
    <property type="RefSeq protein sequence ID" value="NP_001003937.2"/>
</dbReference>
<dbReference type="UCSC" id="uc002rxr.3">
    <property type="organism name" value="human"/>
</dbReference>
<dbReference type="AGR" id="HGNC:14521"/>
<dbReference type="CTD" id="388951"/>
<dbReference type="DisGeNET" id="388951"/>
<dbReference type="GeneCards" id="TSPYL6"/>
<dbReference type="HGNC" id="HGNC:14521">
    <property type="gene designation" value="TSPYL6"/>
</dbReference>
<dbReference type="HPA" id="ENSG00000178021">
    <property type="expression patterns" value="Tissue enriched (testis)"/>
</dbReference>
<dbReference type="neXtProt" id="NX_Q8N831"/>
<dbReference type="OpenTargets" id="ENSG00000178021"/>
<dbReference type="PharmGKB" id="PA134953500"/>
<dbReference type="VEuPathDB" id="HostDB:ENSG00000178021"/>
<dbReference type="eggNOG" id="KOG1508">
    <property type="taxonomic scope" value="Eukaryota"/>
</dbReference>
<dbReference type="GeneTree" id="ENSGT00940000166162"/>
<dbReference type="HOGENOM" id="CLU_051687_2_0_1"/>
<dbReference type="InParanoid" id="Q8N831"/>
<dbReference type="OMA" id="EECAMLS"/>
<dbReference type="OrthoDB" id="19419at2759"/>
<dbReference type="PAN-GO" id="Q8N831">
    <property type="GO annotations" value="4 GO annotations based on evolutionary models"/>
</dbReference>
<dbReference type="PhylomeDB" id="Q8N831"/>
<dbReference type="TreeFam" id="TF313386"/>
<dbReference type="PathwayCommons" id="Q8N831"/>
<dbReference type="SignaLink" id="Q8N831"/>
<dbReference type="BioGRID-ORCS" id="388951">
    <property type="hits" value="17 hits in 1153 CRISPR screens"/>
</dbReference>
<dbReference type="CD-CODE" id="232F8A39">
    <property type="entry name" value="P-body"/>
</dbReference>
<dbReference type="GenomeRNAi" id="388951"/>
<dbReference type="Pharos" id="Q8N831">
    <property type="development level" value="Tdark"/>
</dbReference>
<dbReference type="PRO" id="PR:Q8N831"/>
<dbReference type="Proteomes" id="UP000005640">
    <property type="component" value="Chromosome 2"/>
</dbReference>
<dbReference type="RNAct" id="Q8N831">
    <property type="molecule type" value="protein"/>
</dbReference>
<dbReference type="Bgee" id="ENSG00000178021">
    <property type="expression patterns" value="Expressed in male germ line stem cell (sensu Vertebrata) in testis and 12 other cell types or tissues"/>
</dbReference>
<dbReference type="ExpressionAtlas" id="Q8N831">
    <property type="expression patterns" value="baseline and differential"/>
</dbReference>
<dbReference type="GO" id="GO:0000785">
    <property type="term" value="C:chromatin"/>
    <property type="evidence" value="ECO:0000318"/>
    <property type="project" value="GO_Central"/>
</dbReference>
<dbReference type="GO" id="GO:0005634">
    <property type="term" value="C:nucleus"/>
    <property type="evidence" value="ECO:0000318"/>
    <property type="project" value="GO_Central"/>
</dbReference>
<dbReference type="GO" id="GO:0003682">
    <property type="term" value="F:chromatin binding"/>
    <property type="evidence" value="ECO:0000318"/>
    <property type="project" value="GO_Central"/>
</dbReference>
<dbReference type="GO" id="GO:0042393">
    <property type="term" value="F:histone binding"/>
    <property type="evidence" value="ECO:0000318"/>
    <property type="project" value="GO_Central"/>
</dbReference>
<dbReference type="GO" id="GO:0006334">
    <property type="term" value="P:nucleosome assembly"/>
    <property type="evidence" value="ECO:0007669"/>
    <property type="project" value="InterPro"/>
</dbReference>
<dbReference type="FunFam" id="3.30.1120.90:FF:000002">
    <property type="entry name" value="Testis-specific Y-encoded-like protein 2"/>
    <property type="match status" value="1"/>
</dbReference>
<dbReference type="Gene3D" id="1.20.5.1500">
    <property type="match status" value="1"/>
</dbReference>
<dbReference type="Gene3D" id="3.30.1120.90">
    <property type="entry name" value="Nucleosome assembly protein"/>
    <property type="match status" value="1"/>
</dbReference>
<dbReference type="InterPro" id="IPR037231">
    <property type="entry name" value="NAP-like_sf"/>
</dbReference>
<dbReference type="InterPro" id="IPR002164">
    <property type="entry name" value="NAP_family"/>
</dbReference>
<dbReference type="PANTHER" id="PTHR11875">
    <property type="entry name" value="TESTIS-SPECIFIC Y-ENCODED PROTEIN"/>
    <property type="match status" value="1"/>
</dbReference>
<dbReference type="Pfam" id="PF00956">
    <property type="entry name" value="NAP"/>
    <property type="match status" value="1"/>
</dbReference>
<dbReference type="SUPFAM" id="SSF143113">
    <property type="entry name" value="NAP-like"/>
    <property type="match status" value="1"/>
</dbReference>